<evidence type="ECO:0000255" key="1">
    <source>
        <dbReference type="HAMAP-Rule" id="MF_00473"/>
    </source>
</evidence>
<name>G6PI_FRATO</name>
<dbReference type="EC" id="5.3.1.9" evidence="1"/>
<dbReference type="EMBL" id="CP000437">
    <property type="protein sequence ID" value="ABI83242.1"/>
    <property type="molecule type" value="Genomic_DNA"/>
</dbReference>
<dbReference type="RefSeq" id="WP_011648746.1">
    <property type="nucleotide sequence ID" value="NC_008369.1"/>
</dbReference>
<dbReference type="SMR" id="Q0BKZ2"/>
<dbReference type="KEGG" id="fth:FTH_1430"/>
<dbReference type="UniPathway" id="UPA00109">
    <property type="reaction ID" value="UER00181"/>
</dbReference>
<dbReference type="UniPathway" id="UPA00138"/>
<dbReference type="GO" id="GO:0005829">
    <property type="term" value="C:cytosol"/>
    <property type="evidence" value="ECO:0007669"/>
    <property type="project" value="TreeGrafter"/>
</dbReference>
<dbReference type="GO" id="GO:0097367">
    <property type="term" value="F:carbohydrate derivative binding"/>
    <property type="evidence" value="ECO:0007669"/>
    <property type="project" value="InterPro"/>
</dbReference>
<dbReference type="GO" id="GO:0004347">
    <property type="term" value="F:glucose-6-phosphate isomerase activity"/>
    <property type="evidence" value="ECO:0007669"/>
    <property type="project" value="UniProtKB-UniRule"/>
</dbReference>
<dbReference type="GO" id="GO:0048029">
    <property type="term" value="F:monosaccharide binding"/>
    <property type="evidence" value="ECO:0007669"/>
    <property type="project" value="TreeGrafter"/>
</dbReference>
<dbReference type="GO" id="GO:0006094">
    <property type="term" value="P:gluconeogenesis"/>
    <property type="evidence" value="ECO:0007669"/>
    <property type="project" value="UniProtKB-UniRule"/>
</dbReference>
<dbReference type="GO" id="GO:0051156">
    <property type="term" value="P:glucose 6-phosphate metabolic process"/>
    <property type="evidence" value="ECO:0007669"/>
    <property type="project" value="TreeGrafter"/>
</dbReference>
<dbReference type="GO" id="GO:0006096">
    <property type="term" value="P:glycolytic process"/>
    <property type="evidence" value="ECO:0007669"/>
    <property type="project" value="UniProtKB-UniRule"/>
</dbReference>
<dbReference type="CDD" id="cd05015">
    <property type="entry name" value="SIS_PGI_1"/>
    <property type="match status" value="1"/>
</dbReference>
<dbReference type="CDD" id="cd05016">
    <property type="entry name" value="SIS_PGI_2"/>
    <property type="match status" value="1"/>
</dbReference>
<dbReference type="Gene3D" id="1.10.1390.10">
    <property type="match status" value="1"/>
</dbReference>
<dbReference type="Gene3D" id="3.40.50.10490">
    <property type="entry name" value="Glucose-6-phosphate isomerase like protein, domain 1"/>
    <property type="match status" value="2"/>
</dbReference>
<dbReference type="HAMAP" id="MF_00473">
    <property type="entry name" value="G6P_isomerase"/>
    <property type="match status" value="1"/>
</dbReference>
<dbReference type="InterPro" id="IPR001672">
    <property type="entry name" value="G6P_Isomerase"/>
</dbReference>
<dbReference type="InterPro" id="IPR023096">
    <property type="entry name" value="G6P_Isomerase_C"/>
</dbReference>
<dbReference type="InterPro" id="IPR018189">
    <property type="entry name" value="Phosphoglucose_isomerase_CS"/>
</dbReference>
<dbReference type="InterPro" id="IPR046348">
    <property type="entry name" value="SIS_dom_sf"/>
</dbReference>
<dbReference type="InterPro" id="IPR035476">
    <property type="entry name" value="SIS_PGI_1"/>
</dbReference>
<dbReference type="InterPro" id="IPR035482">
    <property type="entry name" value="SIS_PGI_2"/>
</dbReference>
<dbReference type="NCBIfam" id="NF001211">
    <property type="entry name" value="PRK00179.1"/>
    <property type="match status" value="1"/>
</dbReference>
<dbReference type="PANTHER" id="PTHR11469">
    <property type="entry name" value="GLUCOSE-6-PHOSPHATE ISOMERASE"/>
    <property type="match status" value="1"/>
</dbReference>
<dbReference type="PANTHER" id="PTHR11469:SF1">
    <property type="entry name" value="GLUCOSE-6-PHOSPHATE ISOMERASE"/>
    <property type="match status" value="1"/>
</dbReference>
<dbReference type="Pfam" id="PF00342">
    <property type="entry name" value="PGI"/>
    <property type="match status" value="1"/>
</dbReference>
<dbReference type="PRINTS" id="PR00662">
    <property type="entry name" value="G6PISOMERASE"/>
</dbReference>
<dbReference type="SUPFAM" id="SSF53697">
    <property type="entry name" value="SIS domain"/>
    <property type="match status" value="1"/>
</dbReference>
<dbReference type="PROSITE" id="PS00765">
    <property type="entry name" value="P_GLUCOSE_ISOMERASE_1"/>
    <property type="match status" value="1"/>
</dbReference>
<dbReference type="PROSITE" id="PS00174">
    <property type="entry name" value="P_GLUCOSE_ISOMERASE_2"/>
    <property type="match status" value="1"/>
</dbReference>
<dbReference type="PROSITE" id="PS51463">
    <property type="entry name" value="P_GLUCOSE_ISOMERASE_3"/>
    <property type="match status" value="1"/>
</dbReference>
<protein>
    <recommendedName>
        <fullName evidence="1">Glucose-6-phosphate isomerase</fullName>
        <shortName evidence="1">GPI</shortName>
        <ecNumber evidence="1">5.3.1.9</ecNumber>
    </recommendedName>
    <alternativeName>
        <fullName evidence="1">Phosphoglucose isomerase</fullName>
        <shortName evidence="1">PGI</shortName>
    </alternativeName>
    <alternativeName>
        <fullName evidence="1">Phosphohexose isomerase</fullName>
        <shortName evidence="1">PHI</shortName>
    </alternativeName>
</protein>
<organism>
    <name type="scientific">Francisella tularensis subsp. holarctica (strain OSU18)</name>
    <dbReference type="NCBI Taxonomy" id="393011"/>
    <lineage>
        <taxon>Bacteria</taxon>
        <taxon>Pseudomonadati</taxon>
        <taxon>Pseudomonadota</taxon>
        <taxon>Gammaproteobacteria</taxon>
        <taxon>Thiotrichales</taxon>
        <taxon>Francisellaceae</taxon>
        <taxon>Francisella</taxon>
    </lineage>
</organism>
<keyword id="KW-0963">Cytoplasm</keyword>
<keyword id="KW-0312">Gluconeogenesis</keyword>
<keyword id="KW-0324">Glycolysis</keyword>
<keyword id="KW-0413">Isomerase</keyword>
<reference key="1">
    <citation type="journal article" date="2006" name="J. Bacteriol.">
        <title>Chromosome rearrangement and diversification of Francisella tularensis revealed by the type B (OSU18) genome sequence.</title>
        <authorList>
            <person name="Petrosino J.F."/>
            <person name="Xiang Q."/>
            <person name="Karpathy S.E."/>
            <person name="Jiang H."/>
            <person name="Yerrapragada S."/>
            <person name="Liu Y."/>
            <person name="Gioia J."/>
            <person name="Hemphill L."/>
            <person name="Gonzalez A."/>
            <person name="Raghavan T.M."/>
            <person name="Uzman A."/>
            <person name="Fox G.E."/>
            <person name="Highlander S."/>
            <person name="Reichard M."/>
            <person name="Morton R.J."/>
            <person name="Clinkenbeard K.D."/>
            <person name="Weinstock G.M."/>
        </authorList>
    </citation>
    <scope>NUCLEOTIDE SEQUENCE [LARGE SCALE GENOMIC DNA]</scope>
    <source>
        <strain>OSU18</strain>
    </source>
</reference>
<proteinExistence type="inferred from homology"/>
<feature type="chain" id="PRO_1000013968" description="Glucose-6-phosphate isomerase">
    <location>
        <begin position="1"/>
        <end position="541"/>
    </location>
</feature>
<feature type="active site" description="Proton donor" evidence="1">
    <location>
        <position position="347"/>
    </location>
</feature>
<feature type="active site" evidence="1">
    <location>
        <position position="378"/>
    </location>
</feature>
<feature type="active site" evidence="1">
    <location>
        <position position="506"/>
    </location>
</feature>
<comment type="function">
    <text evidence="1">Catalyzes the reversible isomerization of glucose-6-phosphate to fructose-6-phosphate.</text>
</comment>
<comment type="catalytic activity">
    <reaction evidence="1">
        <text>alpha-D-glucose 6-phosphate = beta-D-fructose 6-phosphate</text>
        <dbReference type="Rhea" id="RHEA:11816"/>
        <dbReference type="ChEBI" id="CHEBI:57634"/>
        <dbReference type="ChEBI" id="CHEBI:58225"/>
        <dbReference type="EC" id="5.3.1.9"/>
    </reaction>
</comment>
<comment type="pathway">
    <text evidence="1">Carbohydrate biosynthesis; gluconeogenesis.</text>
</comment>
<comment type="pathway">
    <text evidence="1">Carbohydrate degradation; glycolysis; D-glyceraldehyde 3-phosphate and glycerone phosphate from D-glucose: step 2/4.</text>
</comment>
<comment type="subcellular location">
    <subcellularLocation>
        <location evidence="1">Cytoplasm</location>
    </subcellularLocation>
</comment>
<comment type="similarity">
    <text evidence="1">Belongs to the GPI family.</text>
</comment>
<gene>
    <name evidence="1" type="primary">pgi</name>
    <name type="ordered locus">FTH_1430</name>
</gene>
<sequence length="541" mass="61268">MLFCDDSKKYLKEQNINLKNEFDKDDKRVEKFSLKHQNIYFDYSKNLINNYILKSLLESAEKSSLKDKIKQMFNGAKINSTEHRAVLHTALRDLSSTPLIVDGQDIRQEVTKEKQRVKELVEKVVSGRWRGFSGKKITDIVNIGIGGSDLGPKMVVRALQPYHCTDLKVHFVSNVDADSLLQALHVVDPETTLFIIASKSFSTEETLLNSISAREWLLDHYYEDEKAVANHFVAISSKLDKVKEFGIDLEHCYKMWDWVGGRYSLWSSIGMSIAFAIGYDNFEKLLAGAYSVDKYFKETEFSKNIPVIMALLASYYSCTYNSQSQALLPYDERLCYFVDYLQQADMESNGKSVNIAGGTVNYQTGVVLWGGVGTNGQHAFHQLLHQGNIFIPVDFIAIATSHHNYDNHQQALLANCFAQSQALMFGQSYDMVYNELLKSGLNETQAKKLAAHKVIPGNRPSTTILLDELSPYSLGALIALYEHKIFVQGVLWDINSYDQWGVELGKKLGKNILKAMNDDSSDEYQNLDDSTRQLIAKVKNK</sequence>
<accession>Q0BKZ2</accession>